<sequence>MSQRGLEALLRPKSIAVIGASMKPNRAGYLMMRNLLAGGFNGPVLPVTPAWKAVLGVLAWPDIASLPFTPDLAVLCTNASRNLALLEELGEKGCKTCIILSAPASQHEDLRACALRHNMRLLGPNSLGLLAPWQGLNASFSPVPIKRGKLAFISQSAAVSNTILDWAQQRKMGFSYFIALGDSLDIDVDELLDYLARDSKTSAILLYLEQLSDARRFVSAARSASRNKPILVIKSGRSPAAQRLLNTTAGMDPAWDAAIQRAGLLRVQDTHELFSAVETLSHMRPLRGDRLMIISNGAAPAALALDALWSRNGKLATLSEETCQKLRDALPEHVAISNPLDLRDDASSEHYIKTLDILLHSQDFDALMVIHSPSAAAPATESAQVLIEAVKHHPRSKYVSLLTNWCGEHSSQEARRLFSEAGLPTYRTPEGTITAFMHMVEYRRNQKQLRETPALPSNLTSNTAEAHLLLQQAIAEGATSLDTHEVQPILQAYGMNTLPTWIASDSTEAVHIAEQIGYPVALKLRSPDIPHKSEVQGVMLYLRTANEVQQAANAIFDRVKMAWPQARVHGLLVQSMANRAGAQELRVVVEHDPVFGPLIMLGEGGVEWRPEDQAVVALPPLNMNLARYLVIQGIKSKKIRARSALRPLDVAGLSQLLVQVSNLIVDCPEIQRLDIHPLLASGSEFTALDVTLDISPFEGDNESRLAVRPYPHQLEEWVELKNGERCLFRPILPEDEPQLQQFISRVTKEDLYYRYFSEINEFTHEDLANMTQIDYDREMAFVAVRRIDQTEEILGVTRAISDPDNIDAEFAVLVRSDLKGLGLGRRLMEKLITYTRDHGLQRLNGITMPNNRGMVALARKLGFNVDIQLEEGIVGLTLNLAQREES</sequence>
<organism>
    <name type="scientific">Escherichia coli (strain K12)</name>
    <dbReference type="NCBI Taxonomy" id="83333"/>
    <lineage>
        <taxon>Bacteria</taxon>
        <taxon>Pseudomonadati</taxon>
        <taxon>Pseudomonadota</taxon>
        <taxon>Gammaproteobacteria</taxon>
        <taxon>Enterobacterales</taxon>
        <taxon>Enterobacteriaceae</taxon>
        <taxon>Escherichia</taxon>
    </lineage>
</organism>
<comment type="function">
    <text evidence="3 5 6 7 8 9 10 11">Catalyzes the acetyl-CoA-dependent acetylation of lysine residues of a large number of target proteins. Acetylates RNase R in exponential phase cells and RNase II (PubMed:21981926, PubMed:22124017, PubMed:26847092). Required for the glucose-dependent acetylation on multiple lysines of alpha, beta and beta' RNAP subunits (PubMed:21696463). Also acetylates acetyl-coenzyme A synthetase (Acs) and the chromosomal replication initiator protein DnaA, and inhibits their activity (PubMed:22059728, PubMed:26251518, PubMed:27484197). Overexpression leads to the acetylation of a large number of additional proteins and inhibits motility (PubMed:30352934).</text>
</comment>
<comment type="catalytic activity">
    <reaction evidence="3 8 9 10 11">
        <text>L-lysyl-[protein] + acetyl-CoA = N(6)-acetyl-L-lysyl-[protein] + CoA + H(+)</text>
        <dbReference type="Rhea" id="RHEA:45948"/>
        <dbReference type="Rhea" id="RHEA-COMP:9752"/>
        <dbReference type="Rhea" id="RHEA-COMP:10731"/>
        <dbReference type="ChEBI" id="CHEBI:15378"/>
        <dbReference type="ChEBI" id="CHEBI:29969"/>
        <dbReference type="ChEBI" id="CHEBI:57287"/>
        <dbReference type="ChEBI" id="CHEBI:57288"/>
        <dbReference type="ChEBI" id="CHEBI:61930"/>
    </reaction>
</comment>
<comment type="biophysicochemical properties">
    <kinetics>
        <KM evidence="8">14.78 uM for Acs</KM>
        <text evidence="8">kcat is 1.02 sec(-1) with acetyl-CoA as substrate. kcat is 1.19 sec(-1) with Acs as substrate.</text>
    </kinetics>
</comment>
<comment type="subunit">
    <text evidence="8">Stable tetramer in solution. Oligomerizes to an octameric form by autoacetylation.</text>
</comment>
<comment type="interaction">
    <interactant intactId="EBI-557388">
        <id>P76594</id>
    </interactant>
    <interactant intactId="EBI-561348">
        <id>P77802</id>
        <label>ecpC</label>
    </interactant>
    <organismsDiffer>false</organismsDiffer>
    <experiments>4</experiments>
</comment>
<comment type="interaction">
    <interactant intactId="EBI-557388">
        <id>P76594</id>
    </interactant>
    <interactant intactId="EBI-560926">
        <id>P0A9W0</id>
        <label>ulaR</label>
    </interactant>
    <organismsDiffer>false</organismsDiffer>
    <experiments>4</experiments>
</comment>
<comment type="induction">
    <text evidence="6 7">Positively regulated by cAMP-CRP. Up-regulated in the presence of non-PTS carbon sources (PubMed:22059728). According to PubMed:22059728, pka is up-regulated during the stationary phase growth, while according to PubMed:22124017, it is absent from the late exponential and stationary phase cells (PubMed:22059728, PubMed:22124017).</text>
</comment>
<comment type="PTM">
    <text evidence="8">Autoacetylated. Deacetylated by CobB.</text>
</comment>
<comment type="disruption phenotype">
    <text evidence="3 4">Deletion mutant has decreased resistance to oxidative and heat stress (PubMed:21703240). Mutant responds poorly to glucose (PubMed:21696463).</text>
</comment>
<comment type="similarity">
    <text evidence="14">In the N-terminal section; belongs to the acetate CoA ligase alpha subunit family.</text>
</comment>
<comment type="similarity">
    <text evidence="14">In the central section; belongs to the acetate CoA ligase beta subunit family.</text>
</comment>
<feature type="chain" id="PRO_0000169272" description="Peptidyl-lysine N-acetyltransferase PatZ">
    <location>
        <begin position="1"/>
        <end position="886"/>
    </location>
</feature>
<feature type="domain" description="ATP-grasp" evidence="1">
    <location>
        <begin position="487"/>
        <end position="523"/>
    </location>
</feature>
<feature type="domain" description="N-acetyltransferase" evidence="2">
    <location>
        <begin position="726"/>
        <end position="881"/>
    </location>
</feature>
<feature type="mutagenesis site" description="Decreases activity at low pH (5-7), but does not change activity at high pH." evidence="8">
    <original>E</original>
    <variation>A</variation>
    <location>
        <position position="809"/>
    </location>
</feature>
<feature type="sequence conflict" description="In Ref. 3; BAA10925." evidence="14" ref="3">
    <original>ST</original>
    <variation>YA</variation>
    <location>
        <begin position="506"/>
        <end position="507"/>
    </location>
</feature>
<proteinExistence type="evidence at protein level"/>
<keyword id="KW-0007">Acetylation</keyword>
<keyword id="KW-0012">Acyltransferase</keyword>
<keyword id="KW-1185">Reference proteome</keyword>
<keyword id="KW-0808">Transferase</keyword>
<protein>
    <recommendedName>
        <fullName evidence="14">Peptidyl-lysine N-acetyltransferase PatZ</fullName>
        <ecNumber evidence="3 8 9 10 11">2.3.1.-</ecNumber>
    </recommendedName>
    <alternativeName>
        <fullName evidence="12">Protein lysine acetyltransferase</fullName>
    </alternativeName>
</protein>
<dbReference type="EC" id="2.3.1.-" evidence="3 8 9 10 11"/>
<dbReference type="EMBL" id="U00096">
    <property type="protein sequence ID" value="AAC75637.1"/>
    <property type="molecule type" value="Genomic_DNA"/>
</dbReference>
<dbReference type="EMBL" id="AP009048">
    <property type="protein sequence ID" value="BAE76754.1"/>
    <property type="molecule type" value="Genomic_DNA"/>
</dbReference>
<dbReference type="EMBL" id="D64044">
    <property type="protein sequence ID" value="BAA10925.1"/>
    <property type="molecule type" value="Genomic_DNA"/>
</dbReference>
<dbReference type="PIR" id="G65036">
    <property type="entry name" value="G65036"/>
</dbReference>
<dbReference type="RefSeq" id="NP_417079.1">
    <property type="nucleotide sequence ID" value="NC_000913.3"/>
</dbReference>
<dbReference type="RefSeq" id="WP_000083005.1">
    <property type="nucleotide sequence ID" value="NZ_LN832404.1"/>
</dbReference>
<dbReference type="SMR" id="P76594"/>
<dbReference type="BioGRID" id="4260608">
    <property type="interactions" value="16"/>
</dbReference>
<dbReference type="BioGRID" id="851394">
    <property type="interactions" value="3"/>
</dbReference>
<dbReference type="DIP" id="DIP-12068N"/>
<dbReference type="FunCoup" id="P76594">
    <property type="interactions" value="78"/>
</dbReference>
<dbReference type="IntAct" id="P76594">
    <property type="interactions" value="30"/>
</dbReference>
<dbReference type="STRING" id="511145.b2584"/>
<dbReference type="jPOST" id="P76594"/>
<dbReference type="PaxDb" id="511145-b2584"/>
<dbReference type="EnsemblBacteria" id="AAC75637">
    <property type="protein sequence ID" value="AAC75637"/>
    <property type="gene ID" value="b2584"/>
</dbReference>
<dbReference type="GeneID" id="947056"/>
<dbReference type="KEGG" id="ecj:JW2568"/>
<dbReference type="KEGG" id="eco:b2584"/>
<dbReference type="KEGG" id="ecoc:C3026_14320"/>
<dbReference type="PATRIC" id="fig|1411691.4.peg.4150"/>
<dbReference type="EchoBASE" id="EB3976"/>
<dbReference type="eggNOG" id="COG0045">
    <property type="taxonomic scope" value="Bacteria"/>
</dbReference>
<dbReference type="eggNOG" id="COG1042">
    <property type="taxonomic scope" value="Bacteria"/>
</dbReference>
<dbReference type="eggNOG" id="COG1670">
    <property type="taxonomic scope" value="Bacteria"/>
</dbReference>
<dbReference type="HOGENOM" id="CLU_007415_0_2_6"/>
<dbReference type="InParanoid" id="P76594"/>
<dbReference type="OMA" id="IVIYMES"/>
<dbReference type="OrthoDB" id="9807426at2"/>
<dbReference type="PhylomeDB" id="P76594"/>
<dbReference type="BioCyc" id="EcoCyc:G7350-MONOMER"/>
<dbReference type="BioCyc" id="MetaCyc:G7350-MONOMER"/>
<dbReference type="BRENDA" id="2.3.1.286">
    <property type="organism ID" value="2026"/>
</dbReference>
<dbReference type="PRO" id="PR:P76594"/>
<dbReference type="Proteomes" id="UP000000625">
    <property type="component" value="Chromosome"/>
</dbReference>
<dbReference type="GO" id="GO:0032991">
    <property type="term" value="C:protein-containing complex"/>
    <property type="evidence" value="ECO:0000314"/>
    <property type="project" value="EcoCyc"/>
</dbReference>
<dbReference type="GO" id="GO:0005524">
    <property type="term" value="F:ATP binding"/>
    <property type="evidence" value="ECO:0007669"/>
    <property type="project" value="InterPro"/>
</dbReference>
<dbReference type="GO" id="GO:0042802">
    <property type="term" value="F:identical protein binding"/>
    <property type="evidence" value="ECO:0000314"/>
    <property type="project" value="EcoCyc"/>
</dbReference>
<dbReference type="GO" id="GO:0046872">
    <property type="term" value="F:metal ion binding"/>
    <property type="evidence" value="ECO:0007669"/>
    <property type="project" value="InterPro"/>
</dbReference>
<dbReference type="GO" id="GO:0061733">
    <property type="term" value="F:protein-lysine-acetyltransferase activity"/>
    <property type="evidence" value="ECO:0000314"/>
    <property type="project" value="EcoCyc"/>
</dbReference>
<dbReference type="GO" id="GO:0009408">
    <property type="term" value="P:response to heat"/>
    <property type="evidence" value="ECO:0000315"/>
    <property type="project" value="EcoCyc"/>
</dbReference>
<dbReference type="GO" id="GO:0006979">
    <property type="term" value="P:response to oxidative stress"/>
    <property type="evidence" value="ECO:0000315"/>
    <property type="project" value="EcoCyc"/>
</dbReference>
<dbReference type="CDD" id="cd04301">
    <property type="entry name" value="NAT_SF"/>
    <property type="match status" value="1"/>
</dbReference>
<dbReference type="FunFam" id="3.40.50.261:FF:000013">
    <property type="entry name" value="Acetyltransferase, GNAT family"/>
    <property type="match status" value="1"/>
</dbReference>
<dbReference type="FunFam" id="3.40.50.720:FF:000380">
    <property type="entry name" value="Acetyltransferase, GNAT family"/>
    <property type="match status" value="1"/>
</dbReference>
<dbReference type="FunFam" id="3.40.630.30:FF:000069">
    <property type="entry name" value="GNAT family acetyltransferase"/>
    <property type="match status" value="1"/>
</dbReference>
<dbReference type="FunFam" id="3.30.1490.20:FF:000020">
    <property type="entry name" value="Protein lysine acetyltransferase"/>
    <property type="match status" value="1"/>
</dbReference>
<dbReference type="FunFam" id="3.40.50.261:FF:000009">
    <property type="entry name" value="Protein lysine acetyltransferase"/>
    <property type="match status" value="1"/>
</dbReference>
<dbReference type="Gene3D" id="3.40.630.30">
    <property type="match status" value="1"/>
</dbReference>
<dbReference type="Gene3D" id="3.30.1490.20">
    <property type="entry name" value="ATP-grasp fold, A domain"/>
    <property type="match status" value="1"/>
</dbReference>
<dbReference type="Gene3D" id="3.30.470.20">
    <property type="entry name" value="ATP-grasp fold, B domain"/>
    <property type="match status" value="1"/>
</dbReference>
<dbReference type="Gene3D" id="3.40.50.720">
    <property type="entry name" value="NAD(P)-binding Rossmann-like Domain"/>
    <property type="match status" value="1"/>
</dbReference>
<dbReference type="Gene3D" id="3.40.50.261">
    <property type="entry name" value="Succinyl-CoA synthetase domains"/>
    <property type="match status" value="2"/>
</dbReference>
<dbReference type="InterPro" id="IPR016181">
    <property type="entry name" value="Acyl_CoA_acyltransferase"/>
</dbReference>
<dbReference type="InterPro" id="IPR011761">
    <property type="entry name" value="ATP-grasp"/>
</dbReference>
<dbReference type="InterPro" id="IPR013815">
    <property type="entry name" value="ATP_grasp_subdomain_1"/>
</dbReference>
<dbReference type="InterPro" id="IPR003781">
    <property type="entry name" value="CoA-bd"/>
</dbReference>
<dbReference type="InterPro" id="IPR000182">
    <property type="entry name" value="GNAT_dom"/>
</dbReference>
<dbReference type="InterPro" id="IPR036291">
    <property type="entry name" value="NAD(P)-bd_dom_sf"/>
</dbReference>
<dbReference type="InterPro" id="IPR032875">
    <property type="entry name" value="Succ_CoA_lig_flav_dom"/>
</dbReference>
<dbReference type="InterPro" id="IPR016102">
    <property type="entry name" value="Succinyl-CoA_synth-like"/>
</dbReference>
<dbReference type="PANTHER" id="PTHR42793">
    <property type="entry name" value="COA BINDING DOMAIN CONTAINING PROTEIN"/>
    <property type="match status" value="1"/>
</dbReference>
<dbReference type="PANTHER" id="PTHR42793:SF1">
    <property type="entry name" value="PEPTIDYL-LYSINE N-ACETYLTRANSFERASE PATZ"/>
    <property type="match status" value="1"/>
</dbReference>
<dbReference type="Pfam" id="PF00583">
    <property type="entry name" value="Acetyltransf_1"/>
    <property type="match status" value="1"/>
</dbReference>
<dbReference type="Pfam" id="PF13549">
    <property type="entry name" value="ATP-grasp_5"/>
    <property type="match status" value="1"/>
</dbReference>
<dbReference type="Pfam" id="PF13380">
    <property type="entry name" value="CoA_binding_2"/>
    <property type="match status" value="1"/>
</dbReference>
<dbReference type="Pfam" id="PF13607">
    <property type="entry name" value="Succ_CoA_lig"/>
    <property type="match status" value="1"/>
</dbReference>
<dbReference type="SMART" id="SM00881">
    <property type="entry name" value="CoA_binding"/>
    <property type="match status" value="1"/>
</dbReference>
<dbReference type="SUPFAM" id="SSF55729">
    <property type="entry name" value="Acyl-CoA N-acyltransferases (Nat)"/>
    <property type="match status" value="1"/>
</dbReference>
<dbReference type="SUPFAM" id="SSF56059">
    <property type="entry name" value="Glutathione synthetase ATP-binding domain-like"/>
    <property type="match status" value="1"/>
</dbReference>
<dbReference type="SUPFAM" id="SSF51735">
    <property type="entry name" value="NAD(P)-binding Rossmann-fold domains"/>
    <property type="match status" value="1"/>
</dbReference>
<dbReference type="SUPFAM" id="SSF52210">
    <property type="entry name" value="Succinyl-CoA synthetase domains"/>
    <property type="match status" value="2"/>
</dbReference>
<dbReference type="PROSITE" id="PS50975">
    <property type="entry name" value="ATP_GRASP"/>
    <property type="match status" value="1"/>
</dbReference>
<dbReference type="PROSITE" id="PS51186">
    <property type="entry name" value="GNAT"/>
    <property type="match status" value="1"/>
</dbReference>
<accession>P76594</accession>
<accession>Q2MAF2</accession>
<accession>Q47320</accession>
<evidence type="ECO:0000255" key="1">
    <source>
        <dbReference type="PROSITE-ProRule" id="PRU00409"/>
    </source>
</evidence>
<evidence type="ECO:0000255" key="2">
    <source>
        <dbReference type="PROSITE-ProRule" id="PRU00532"/>
    </source>
</evidence>
<evidence type="ECO:0000269" key="3">
    <source>
    </source>
</evidence>
<evidence type="ECO:0000269" key="4">
    <source>
    </source>
</evidence>
<evidence type="ECO:0000269" key="5">
    <source>
    </source>
</evidence>
<evidence type="ECO:0000269" key="6">
    <source>
    </source>
</evidence>
<evidence type="ECO:0000269" key="7">
    <source>
    </source>
</evidence>
<evidence type="ECO:0000269" key="8">
    <source>
    </source>
</evidence>
<evidence type="ECO:0000269" key="9">
    <source>
    </source>
</evidence>
<evidence type="ECO:0000269" key="10">
    <source>
    </source>
</evidence>
<evidence type="ECO:0000269" key="11">
    <source>
    </source>
</evidence>
<evidence type="ECO:0000303" key="12">
    <source>
    </source>
</evidence>
<evidence type="ECO:0000303" key="13">
    <source>
    </source>
</evidence>
<evidence type="ECO:0000305" key="14"/>
<gene>
    <name evidence="13" type="primary">patZ</name>
    <name evidence="12" type="synonym">pka</name>
    <name type="synonym">yfiQ</name>
    <name type="ordered locus">b2584</name>
    <name type="ordered locus">JW2568</name>
</gene>
<reference key="1">
    <citation type="journal article" date="1997" name="Science">
        <title>The complete genome sequence of Escherichia coli K-12.</title>
        <authorList>
            <person name="Blattner F.R."/>
            <person name="Plunkett G. III"/>
            <person name="Bloch C.A."/>
            <person name="Perna N.T."/>
            <person name="Burland V."/>
            <person name="Riley M."/>
            <person name="Collado-Vides J."/>
            <person name="Glasner J.D."/>
            <person name="Rode C.K."/>
            <person name="Mayhew G.F."/>
            <person name="Gregor J."/>
            <person name="Davis N.W."/>
            <person name="Kirkpatrick H.A."/>
            <person name="Goeden M.A."/>
            <person name="Rose D.J."/>
            <person name="Mau B."/>
            <person name="Shao Y."/>
        </authorList>
    </citation>
    <scope>NUCLEOTIDE SEQUENCE [LARGE SCALE GENOMIC DNA]</scope>
    <source>
        <strain>K12 / MG1655 / ATCC 47076</strain>
    </source>
</reference>
<reference key="2">
    <citation type="journal article" date="2006" name="Mol. Syst. Biol.">
        <title>Highly accurate genome sequences of Escherichia coli K-12 strains MG1655 and W3110.</title>
        <authorList>
            <person name="Hayashi K."/>
            <person name="Morooka N."/>
            <person name="Yamamoto Y."/>
            <person name="Fujita K."/>
            <person name="Isono K."/>
            <person name="Choi S."/>
            <person name="Ohtsubo E."/>
            <person name="Baba T."/>
            <person name="Wanner B.L."/>
            <person name="Mori H."/>
            <person name="Horiuchi T."/>
        </authorList>
    </citation>
    <scope>NUCLEOTIDE SEQUENCE [LARGE SCALE GENOMIC DNA]</scope>
    <source>
        <strain>K12 / W3110 / ATCC 27325 / DSM 5911</strain>
    </source>
</reference>
<reference key="3">
    <citation type="submission" date="1995-09" db="EMBL/GenBank/DDBJ databases">
        <authorList>
            <person name="Nashimoto H."/>
            <person name="Saito N."/>
        </authorList>
    </citation>
    <scope>NUCLEOTIDE SEQUENCE [GENOMIC DNA] OF 1-612</scope>
    <source>
        <strain>K12</strain>
    </source>
</reference>
<reference key="4">
    <citation type="journal article" date="2011" name="Biochem. Biophys. Res. Commun.">
        <title>Protein acetylation in prokaryotes increases stress resistance.</title>
        <authorList>
            <person name="Ma Q."/>
            <person name="Wood T.K."/>
        </authorList>
    </citation>
    <scope>DISRUPTION PHENOTYPE</scope>
    <source>
        <strain>K12 / BW25113</strain>
    </source>
</reference>
<reference key="5">
    <citation type="journal article" date="2011" name="Mol. Cell">
        <title>Acetylation regulates the stability of a bacterial protein: growth stage-dependent modification of RNase R.</title>
        <authorList>
            <person name="Liang W."/>
            <person name="Malhotra A."/>
            <person name="Deutscher M.P."/>
        </authorList>
    </citation>
    <scope>FUNCTION IN ACETYLATION OF RNASE R</scope>
    <scope>GENE NAME</scope>
    <source>
        <strain>K12 / MG1655 / ATCC 47076</strain>
    </source>
</reference>
<reference key="6">
    <citation type="journal article" date="2011" name="Mol. Microbiol.">
        <title>Involvement of protein acetylation in glucose-induced transcription of a stress-responsive promoter.</title>
        <authorList>
            <person name="Lima B.P."/>
            <person name="Antelmann H."/>
            <person name="Gronau K."/>
            <person name="Chi B.K."/>
            <person name="Becher D."/>
            <person name="Brinsmade S.R."/>
            <person name="Wolfe A.J."/>
        </authorList>
    </citation>
    <scope>FUNCTION IN ACETYLATION OF RNAP</scope>
    <scope>CATALYTIC ACTIVITY</scope>
    <scope>DISRUPTION PHENOTYPE</scope>
</reference>
<reference key="7">
    <citation type="journal article" date="2011" name="Mol. Microbiol.">
        <title>cAMP-CRP co-ordinates the expression of the protein acetylation pathway with central metabolism in Escherichia coli.</title>
        <authorList>
            <person name="Castano-Cerezo S."/>
            <person name="Bernal V."/>
            <person name="Blanco-Catala J."/>
            <person name="Iborra J.L."/>
            <person name="Canovas M."/>
        </authorList>
    </citation>
    <scope>FUNCTION</scope>
    <scope>INDUCTION</scope>
    <source>
        <strain>K12 / BW25113</strain>
    </source>
</reference>
<reference key="8">
    <citation type="journal article" date="2012" name="RNA">
        <title>Post-translational modification of RNase R is regulated by stress-dependent reduction in the acetylating enzyme Pka (YfiQ).</title>
        <authorList>
            <person name="Liang W."/>
            <person name="Deutscher M.P."/>
        </authorList>
    </citation>
    <scope>FUNCTION</scope>
    <scope>INDUCTION</scope>
    <source>
        <strain>K12 / MG1655 / ATCC 47076</strain>
    </source>
</reference>
<reference key="9">
    <citation type="journal article" date="2015" name="J. Biol. Chem.">
        <title>The protein acetyltransferase PatZ from Escherichia coli is regulated by autoacetylation-induced oligomerization.</title>
        <authorList>
            <person name="de Diego Puente T."/>
            <person name="Gallego-Jara J."/>
            <person name="Castano-Cerezo S."/>
            <person name="Bernal Sanchez V."/>
            <person name="Fernandez Espin V."/>
            <person name="Garcia de la Torre J."/>
            <person name="Manjon Rubio A."/>
            <person name="Canovas Diaz M."/>
        </authorList>
    </citation>
    <scope>FUNCTION</scope>
    <scope>CATALYTIC ACTIVITY</scope>
    <scope>BIOPHYSICOCHEMICAL PROPERTIES</scope>
    <scope>SUBUNIT</scope>
    <scope>ACETYLATION</scope>
    <scope>MUTAGENESIS OF GLU-809</scope>
</reference>
<reference key="10">
    <citation type="journal article" date="2016" name="Nucleic Acids Res.">
        <title>Reversible acetylation on Lys501 regulates the activity of RNase II.</title>
        <authorList>
            <person name="Song L."/>
            <person name="Wang G."/>
            <person name="Malhotra A."/>
            <person name="Deutscher M.P."/>
            <person name="Liang W."/>
        </authorList>
    </citation>
    <scope>FUNCTION IN ACETYLATION OF RNASE II</scope>
    <scope>CATALYTIC ACTIVITY</scope>
    <source>
        <strain>K12</strain>
    </source>
</reference>
<reference key="11">
    <citation type="journal article" date="2016" name="Sci. Rep.">
        <title>Reversible lysine acetylation is involved in DNA replication initiation by regulating activities of initiator DnaA in Escherichia coli.</title>
        <authorList>
            <person name="Zhang Q."/>
            <person name="Zhou A."/>
            <person name="Li S."/>
            <person name="Ni J."/>
            <person name="Tao J."/>
            <person name="Lu J."/>
            <person name="Wan B."/>
            <person name="Li S."/>
            <person name="Zhang J."/>
            <person name="Zhao S."/>
            <person name="Zhao G.P."/>
            <person name="Shao F."/>
            <person name="Yao Y.F."/>
        </authorList>
    </citation>
    <scope>FUNCTION IN ACETYLATION OF DNAA</scope>
    <scope>CATALYTIC ACTIVITY</scope>
</reference>
<reference key="12">
    <citation type="journal article" date="2018" name="MBio">
        <title>Identification of novel protein lysine acetyltransferases in Escherichia coli.</title>
        <authorList>
            <person name="Christensen D.G."/>
            <person name="Meyer J.G."/>
            <person name="Baumgartner J.T."/>
            <person name="D'Souza A.K."/>
            <person name="Nelson W.C."/>
            <person name="Payne S.H."/>
            <person name="Kuhn M.L."/>
            <person name="Schilling B."/>
            <person name="Wolfe A.J."/>
        </authorList>
    </citation>
    <scope>FUNCTION</scope>
    <scope>OVEREXPRESSION</scope>
    <scope>CATALYTIC ACTIVITY</scope>
    <source>
        <strain>K12</strain>
    </source>
</reference>
<reference key="13">
    <citation type="journal article" date="2019" name="MBio">
        <title>Correction for Christensen et al., 'Identification of novel protein lysine acetyltransferases in Escherichia coli'.</title>
        <authorList>
            <person name="Christensen D.G."/>
            <person name="Meyer J.G."/>
            <person name="Baumgartner J.T."/>
            <person name="D'Souza A.K."/>
            <person name="Nelson W.C."/>
            <person name="Payne S.H."/>
            <person name="Kuhn M.L."/>
            <person name="Schilling B."/>
            <person name="Wolfe A.J."/>
        </authorList>
    </citation>
    <scope>ERRATUM OF PUBMED:30352934</scope>
</reference>
<name>LYSAC_ECOLI</name>